<accession>B4UT09</accession>
<name>PI4KB_OTOGA</name>
<reference key="1">
    <citation type="submission" date="2011-03" db="EMBL/GenBank/DDBJ databases">
        <title>Version 3 of the genome sequence of Otolemur garnettii(Bushbaby).</title>
        <authorList>
            <consortium name="The Broad Institute Genome Sequencing Platform"/>
            <person name="Di Palma F."/>
            <person name="Johnson J."/>
            <person name="Lander E.S."/>
            <person name="Lindblad-Toh K."/>
            <person name="Jaffe D.B."/>
            <person name="Gnerre S."/>
            <person name="MacCallum I."/>
            <person name="Przybylski D."/>
            <person name="Ribeiro F.J."/>
            <person name="Burton J.N."/>
            <person name="Walker B.J."/>
            <person name="Sharpe T."/>
            <person name="Hall G."/>
        </authorList>
    </citation>
    <scope>NUCLEOTIDE SEQUENCE [LARGE SCALE GENOMIC DNA]</scope>
</reference>
<gene>
    <name type="primary">PI4KB</name>
    <name type="synonym">PIK4CB</name>
</gene>
<proteinExistence type="inferred from homology"/>
<evidence type="ECO:0000250" key="1"/>
<evidence type="ECO:0000250" key="2">
    <source>
        <dbReference type="UniProtKB" id="O02810"/>
    </source>
</evidence>
<evidence type="ECO:0000250" key="3">
    <source>
        <dbReference type="UniProtKB" id="O08561"/>
    </source>
</evidence>
<evidence type="ECO:0000250" key="4">
    <source>
        <dbReference type="UniProtKB" id="Q8BKC8"/>
    </source>
</evidence>
<evidence type="ECO:0000250" key="5">
    <source>
        <dbReference type="UniProtKB" id="Q9UBF8"/>
    </source>
</evidence>
<evidence type="ECO:0000255" key="6">
    <source>
        <dbReference type="PROSITE-ProRule" id="PRU00269"/>
    </source>
</evidence>
<evidence type="ECO:0000255" key="7">
    <source>
        <dbReference type="PROSITE-ProRule" id="PRU00878"/>
    </source>
</evidence>
<evidence type="ECO:0000256" key="8">
    <source>
        <dbReference type="SAM" id="MobiDB-lite"/>
    </source>
</evidence>
<evidence type="ECO:0000305" key="9"/>
<dbReference type="EC" id="2.7.1.67" evidence="5"/>
<dbReference type="EMBL" id="DP000887">
    <property type="protein sequence ID" value="ACG76406.1"/>
    <property type="molecule type" value="Genomic_DNA"/>
</dbReference>
<dbReference type="SMR" id="B4UT09"/>
<dbReference type="FunCoup" id="B4UT09">
    <property type="interactions" value="3468"/>
</dbReference>
<dbReference type="STRING" id="30611.ENSOGAP00000007262"/>
<dbReference type="eggNOG" id="KOG0903">
    <property type="taxonomic scope" value="Eukaryota"/>
</dbReference>
<dbReference type="InParanoid" id="B4UT09"/>
<dbReference type="Proteomes" id="UP000005225">
    <property type="component" value="Unassembled WGS sequence"/>
</dbReference>
<dbReference type="GO" id="GO:0000139">
    <property type="term" value="C:Golgi membrane"/>
    <property type="evidence" value="ECO:0007669"/>
    <property type="project" value="UniProtKB-SubCell"/>
</dbReference>
<dbReference type="GO" id="GO:0005741">
    <property type="term" value="C:mitochondrial outer membrane"/>
    <property type="evidence" value="ECO:0007669"/>
    <property type="project" value="UniProtKB-SubCell"/>
</dbReference>
<dbReference type="GO" id="GO:0030867">
    <property type="term" value="C:rough endoplasmic reticulum membrane"/>
    <property type="evidence" value="ECO:0007669"/>
    <property type="project" value="UniProtKB-SubCell"/>
</dbReference>
<dbReference type="GO" id="GO:0004430">
    <property type="term" value="F:1-phosphatidylinositol 4-kinase activity"/>
    <property type="evidence" value="ECO:0000250"/>
    <property type="project" value="UniProtKB"/>
</dbReference>
<dbReference type="GO" id="GO:0071889">
    <property type="term" value="F:14-3-3 protein binding"/>
    <property type="evidence" value="ECO:0000250"/>
    <property type="project" value="UniProtKB"/>
</dbReference>
<dbReference type="GO" id="GO:0005524">
    <property type="term" value="F:ATP binding"/>
    <property type="evidence" value="ECO:0007669"/>
    <property type="project" value="UniProtKB-KW"/>
</dbReference>
<dbReference type="GO" id="GO:0048839">
    <property type="term" value="P:inner ear development"/>
    <property type="evidence" value="ECO:0000250"/>
    <property type="project" value="UniProtKB"/>
</dbReference>
<dbReference type="GO" id="GO:0046854">
    <property type="term" value="P:phosphatidylinositol phosphate biosynthetic process"/>
    <property type="evidence" value="ECO:0007669"/>
    <property type="project" value="InterPro"/>
</dbReference>
<dbReference type="GO" id="GO:0048015">
    <property type="term" value="P:phosphatidylinositol-mediated signaling"/>
    <property type="evidence" value="ECO:0007669"/>
    <property type="project" value="TreeGrafter"/>
</dbReference>
<dbReference type="CDD" id="cd22246">
    <property type="entry name" value="PI4KB_NTD"/>
    <property type="match status" value="1"/>
</dbReference>
<dbReference type="CDD" id="cd05168">
    <property type="entry name" value="PI4Kc_III_beta"/>
    <property type="match status" value="1"/>
</dbReference>
<dbReference type="FunFam" id="3.30.1010.10:FF:000031">
    <property type="entry name" value="Phosphatidylinositol 4-kinase beta"/>
    <property type="match status" value="1"/>
</dbReference>
<dbReference type="FunFam" id="1.10.1070.11:FF:000004">
    <property type="entry name" value="Phosphatidylinositol 4-kinase, catalytic, beta"/>
    <property type="match status" value="1"/>
</dbReference>
<dbReference type="Gene3D" id="1.10.1070.11">
    <property type="entry name" value="Phosphatidylinositol 3-/4-kinase, catalytic domain"/>
    <property type="match status" value="1"/>
</dbReference>
<dbReference type="Gene3D" id="3.30.1010.10">
    <property type="entry name" value="Phosphatidylinositol 3-kinase Catalytic Subunit, Chain A, domain 4"/>
    <property type="match status" value="1"/>
</dbReference>
<dbReference type="InterPro" id="IPR011009">
    <property type="entry name" value="Kinase-like_dom_sf"/>
</dbReference>
<dbReference type="InterPro" id="IPR000403">
    <property type="entry name" value="PI3/4_kinase_cat_dom"/>
</dbReference>
<dbReference type="InterPro" id="IPR036940">
    <property type="entry name" value="PI3/4_kinase_cat_sf"/>
</dbReference>
<dbReference type="InterPro" id="IPR018936">
    <property type="entry name" value="PI3/4_kinase_CS"/>
</dbReference>
<dbReference type="InterPro" id="IPR001263">
    <property type="entry name" value="PI3K_accessory_dom"/>
</dbReference>
<dbReference type="InterPro" id="IPR049160">
    <property type="entry name" value="PI4KB-PIK1_PIK"/>
</dbReference>
<dbReference type="InterPro" id="IPR015433">
    <property type="entry name" value="PI_Kinase"/>
</dbReference>
<dbReference type="PANTHER" id="PTHR10048:SF22">
    <property type="entry name" value="PHOSPHATIDYLINOSITOL 4-KINASE BETA"/>
    <property type="match status" value="1"/>
</dbReference>
<dbReference type="PANTHER" id="PTHR10048">
    <property type="entry name" value="PHOSPHATIDYLINOSITOL KINASE"/>
    <property type="match status" value="1"/>
</dbReference>
<dbReference type="Pfam" id="PF00454">
    <property type="entry name" value="PI3_PI4_kinase"/>
    <property type="match status" value="1"/>
</dbReference>
<dbReference type="Pfam" id="PF21245">
    <property type="entry name" value="PI4KB-PIK1_PIK"/>
    <property type="match status" value="1"/>
</dbReference>
<dbReference type="SMART" id="SM00146">
    <property type="entry name" value="PI3Kc"/>
    <property type="match status" value="1"/>
</dbReference>
<dbReference type="SUPFAM" id="SSF56112">
    <property type="entry name" value="Protein kinase-like (PK-like)"/>
    <property type="match status" value="1"/>
</dbReference>
<dbReference type="PROSITE" id="PS00915">
    <property type="entry name" value="PI3_4_KINASE_1"/>
    <property type="match status" value="1"/>
</dbReference>
<dbReference type="PROSITE" id="PS00916">
    <property type="entry name" value="PI3_4_KINASE_2"/>
    <property type="match status" value="1"/>
</dbReference>
<dbReference type="PROSITE" id="PS50290">
    <property type="entry name" value="PI3_4_KINASE_3"/>
    <property type="match status" value="1"/>
</dbReference>
<dbReference type="PROSITE" id="PS51545">
    <property type="entry name" value="PIK_HELICAL"/>
    <property type="match status" value="1"/>
</dbReference>
<comment type="function">
    <text evidence="3 5">Phosphorylates phosphatidylinositol (PI) in the first committed step in the production of the second messenger inositol-1,4,5,-trisphosphate (PIP). May regulate Golgi disintegration/reorganization during mitosis, possibly via its phosphorylation (By similarity). Involved in Golgi-to-plasma membrane trafficking (By similarity). May play an important role in the inner ear development.</text>
</comment>
<comment type="catalytic activity">
    <reaction evidence="5">
        <text>a 1,2-diacyl-sn-glycero-3-phospho-(1D-myo-inositol) + ATP = a 1,2-diacyl-sn-glycero-3-phospho-(1D-myo-inositol 4-phosphate) + ADP + H(+)</text>
        <dbReference type="Rhea" id="RHEA:19877"/>
        <dbReference type="ChEBI" id="CHEBI:15378"/>
        <dbReference type="ChEBI" id="CHEBI:30616"/>
        <dbReference type="ChEBI" id="CHEBI:57880"/>
        <dbReference type="ChEBI" id="CHEBI:58178"/>
        <dbReference type="ChEBI" id="CHEBI:456216"/>
        <dbReference type="EC" id="2.7.1.67"/>
    </reaction>
    <physiologicalReaction direction="left-to-right" evidence="5">
        <dbReference type="Rhea" id="RHEA:19878"/>
    </physiologicalReaction>
</comment>
<comment type="cofactor">
    <cofactor evidence="5">
        <name>Mg(2+)</name>
        <dbReference type="ChEBI" id="CHEBI:18420"/>
    </cofactor>
    <cofactor evidence="5">
        <name>Mn(2+)</name>
        <dbReference type="ChEBI" id="CHEBI:29035"/>
    </cofactor>
</comment>
<comment type="activity regulation">
    <text evidence="2">Inhibited by wortmannin. Increased kinase activity upon interaction with NCS1/FREQ.</text>
</comment>
<comment type="subunit">
    <text evidence="3 5">Interacts with ARF1 and ARF3 in the Golgi complex, but not with ARF4, ARF5 or ARF6 (By similarity). Interacts with NCS1/FREQ in a calcium-independent manner. Interacts with CALN1/CABP8 and CALN2/CABP7; in a calcium-dependent manner; this interaction competes with NCS1/FREQ binding (By similarity). Interacts with ACBD3. Interacts with ARMH3, YWHAB, YWHAE, YWHAG, YWHAH, YWHAQ, YWHAZ and SFN (By similarity). Interacts with GGA2 (via VHS domain); the interaction is important for PI4KB location at the Golgi apparatus membrane (By similarity). Interacts with ATG9A.</text>
</comment>
<comment type="subcellular location">
    <subcellularLocation>
        <location evidence="1">Endomembrane system</location>
    </subcellularLocation>
    <subcellularLocation>
        <location evidence="1">Mitochondrion outer membrane</location>
        <topology evidence="1">Peripheral membrane protein</topology>
    </subcellularLocation>
    <subcellularLocation>
        <location evidence="1">Rough endoplasmic reticulum membrane</location>
        <topology evidence="1">Peripheral membrane protein</topology>
    </subcellularLocation>
    <subcellularLocation>
        <location evidence="1">Golgi apparatus</location>
    </subcellularLocation>
    <subcellularLocation>
        <location evidence="5">Golgi apparatus membrane</location>
    </subcellularLocation>
    <text evidence="5">Found in the outer membrane of mitochondria and membranes of the rough endoplasmic reticulum. Recruited to the Golgi complex by the small GTPase ARF to stimulate the synthesis of phosphatidylinositol 4,5-bisphosphate (PIP2) on the Golgi complex. Recruited to the Golgi apparatus membrane by ACBD3, GGA2 is also involved in the recruitment.</text>
</comment>
<comment type="similarity">
    <text evidence="9">Belongs to the PI3/PI4-kinase family. Type III PI4K subfamily.</text>
</comment>
<organism>
    <name type="scientific">Otolemur garnettii</name>
    <name type="common">Small-eared galago</name>
    <name type="synonym">Garnett's greater bushbaby</name>
    <dbReference type="NCBI Taxonomy" id="30611"/>
    <lineage>
        <taxon>Eukaryota</taxon>
        <taxon>Metazoa</taxon>
        <taxon>Chordata</taxon>
        <taxon>Craniata</taxon>
        <taxon>Vertebrata</taxon>
        <taxon>Euteleostomi</taxon>
        <taxon>Mammalia</taxon>
        <taxon>Eutheria</taxon>
        <taxon>Euarchontoglires</taxon>
        <taxon>Primates</taxon>
        <taxon>Strepsirrhini</taxon>
        <taxon>Lorisiformes</taxon>
        <taxon>Galagidae</taxon>
        <taxon>Otolemur</taxon>
    </lineage>
</organism>
<sequence length="816" mass="91516">MGDTVVEPTPLKPTSESTPGPAGSNGGSLLSVITEGVGELSVIDPEVAQKACQEVLEKVKLLHGGVAISSRNSPLELVNGDGVDNEIRCLDDPPSRIREEEDEMGATVAVGTAKGARRQRQNNSAKQSWLLRLFESKLFDISMAMSYLYNSKEPGVQAYIGNRLFCFRNEDVDFYLPQLLNMYIHMDEDVGDAIKPYIVHRCRQSINFSLQCALLLGAYSSDMHISTQRHSRGTKLRKLILSDELKPAHRKRELPSLSPAPDTGLSPSKRTHQRSKSDATASISLSSNLKRTASNPKVENEDEELSSSTESIDNSFSSPVRLAPEREFIKSLMAIGKRLATLPTKEQKTQRLISELSLLNHKLPARVWLPTAGFDHHVVRVPHTQAVVLNSKDKAPYLIYVEVLECENFDTTSVPARIPENRIRSTRSVENLPECGITHEQRAGSFSTVPNYDNDDEAWSVDDIGELQVELPEVHTNSCDNISQFSVDSITSQESKEPVFIAAGDIRRRLSEQLAHTPTAFKRDPEDPSAVALKEPWQEKVRRIREGSPYGHLPNWRLLSVIVKCGDDLRQELLAFQVLKQLQSIWEQERVPLWIKPYKILVISADSGMIEPVVNAVSIHQVKKQSQLSLLDYFLQEHGSYTTEAFLSAQRNFVQSCAGYCLVCYLLQVKDRHNGNILLDAEGHIIHIDFGFILSSSPRNLGFETSAFKLTTEFVDVMGGLDGDMFNYYKMLMLQGLIAARKHMDKVVQIVEIMQQGSQLPCFHGSSTIRNLKERFHMSMTEEQLQLLVEQMVDGSMRSITTKLYDGFQYLTNGIM</sequence>
<feature type="initiator methionine" description="Removed" evidence="5">
    <location>
        <position position="1"/>
    </location>
</feature>
<feature type="chain" id="PRO_0000365165" description="Phosphatidylinositol 4-kinase beta">
    <location>
        <begin position="2"/>
        <end position="816"/>
    </location>
</feature>
<feature type="domain" description="PIK helical" evidence="7">
    <location>
        <begin position="52"/>
        <end position="242"/>
    </location>
</feature>
<feature type="domain" description="PI3K/PI4K catalytic" evidence="6">
    <location>
        <begin position="535"/>
        <end position="801"/>
    </location>
</feature>
<feature type="region of interest" description="Disordered" evidence="8">
    <location>
        <begin position="1"/>
        <end position="30"/>
    </location>
</feature>
<feature type="region of interest" description="Interaction with ACBD3" evidence="5">
    <location>
        <begin position="2"/>
        <end position="68"/>
    </location>
</feature>
<feature type="region of interest" description="Disordered" evidence="8">
    <location>
        <begin position="248"/>
        <end position="318"/>
    </location>
</feature>
<feature type="region of interest" description="G-loop" evidence="6">
    <location>
        <begin position="541"/>
        <end position="547"/>
    </location>
</feature>
<feature type="region of interest" description="Catalytic loop" evidence="6">
    <location>
        <begin position="668"/>
        <end position="676"/>
    </location>
</feature>
<feature type="region of interest" description="Activation loop" evidence="6">
    <location>
        <begin position="687"/>
        <end position="711"/>
    </location>
</feature>
<feature type="compositionally biased region" description="Polar residues" evidence="8">
    <location>
        <begin position="278"/>
        <end position="297"/>
    </location>
</feature>
<feature type="compositionally biased region" description="Polar residues" evidence="8">
    <location>
        <begin position="306"/>
        <end position="318"/>
    </location>
</feature>
<feature type="modified residue" description="N-acetylglycine" evidence="5">
    <location>
        <position position="2"/>
    </location>
</feature>
<feature type="modified residue" description="Phosphoserine" evidence="5">
    <location>
        <position position="258"/>
    </location>
</feature>
<feature type="modified residue" description="Phosphothreonine" evidence="5">
    <location>
        <position position="263"/>
    </location>
</feature>
<feature type="modified residue" description="Phosphoserine" evidence="5">
    <location>
        <position position="266"/>
    </location>
</feature>
<feature type="modified residue" description="Phosphoserine" evidence="4">
    <location>
        <position position="275"/>
    </location>
</feature>
<feature type="modified residue" description="Phosphoserine" evidence="5">
    <location>
        <position position="277"/>
    </location>
</feature>
<feature type="modified residue" description="Phosphoserine" evidence="4">
    <location>
        <position position="284"/>
    </location>
</feature>
<feature type="modified residue" description="Phosphoserine" evidence="5">
    <location>
        <position position="294"/>
    </location>
</feature>
<feature type="modified residue" description="Phosphoserine" evidence="5">
    <location>
        <position position="428"/>
    </location>
</feature>
<feature type="modified residue" description="Phosphothreonine" evidence="5">
    <location>
        <position position="438"/>
    </location>
</feature>
<feature type="modified residue" description="Phosphoserine" evidence="5">
    <location>
        <position position="511"/>
    </location>
</feature>
<feature type="modified residue" description="Phosphothreonine" evidence="5">
    <location>
        <position position="517"/>
    </location>
</feature>
<feature type="modified residue" description="Phosphothreonine" evidence="5">
    <location>
        <position position="519"/>
    </location>
</feature>
<keyword id="KW-0007">Acetylation</keyword>
<keyword id="KW-0067">ATP-binding</keyword>
<keyword id="KW-0256">Endoplasmic reticulum</keyword>
<keyword id="KW-0333">Golgi apparatus</keyword>
<keyword id="KW-0418">Kinase</keyword>
<keyword id="KW-0443">Lipid metabolism</keyword>
<keyword id="KW-0472">Membrane</keyword>
<keyword id="KW-0496">Mitochondrion</keyword>
<keyword id="KW-1000">Mitochondrion outer membrane</keyword>
<keyword id="KW-0547">Nucleotide-binding</keyword>
<keyword id="KW-0597">Phosphoprotein</keyword>
<keyword id="KW-1185">Reference proteome</keyword>
<keyword id="KW-0808">Transferase</keyword>
<protein>
    <recommendedName>
        <fullName>Phosphatidylinositol 4-kinase beta</fullName>
        <shortName>PI4K-beta</shortName>
        <shortName>PI4Kbeta</shortName>
        <shortName>PtdIns 4-kinase beta</shortName>
        <ecNumber evidence="5">2.7.1.67</ecNumber>
    </recommendedName>
</protein>